<gene>
    <name evidence="7" type="primary">hars-1</name>
    <name evidence="7" type="synonym">hrs-1</name>
    <name evidence="4" type="synonym">syh-1</name>
    <name evidence="7" type="ORF">T11G6.1</name>
</gene>
<keyword id="KW-0025">Alternative splicing</keyword>
<keyword id="KW-0030">Aminoacyl-tRNA synthetase</keyword>
<keyword id="KW-0067">ATP-binding</keyword>
<keyword id="KW-0436">Ligase</keyword>
<keyword id="KW-0547">Nucleotide-binding</keyword>
<keyword id="KW-0648">Protein biosynthesis</keyword>
<keyword id="KW-1185">Reference proteome</keyword>
<proteinExistence type="evidence at transcript level"/>
<comment type="function">
    <text evidence="2 3 5">Involved in protein synthesis (PubMed:23076791). Catalyzes the specific attachment of an amino acid to its cognate tRNA in a 2 step reaction: the amino acid (AA) is first activated by ATP to form AA-AMP and then transferred to the acceptor end of the tRNA (Probable). Required for germ cell development (PubMed:21464306).</text>
</comment>
<comment type="catalytic activity">
    <reaction>
        <text>tRNA(His) + L-histidine + ATP = L-histidyl-tRNA(His) + AMP + diphosphate + H(+)</text>
        <dbReference type="Rhea" id="RHEA:17313"/>
        <dbReference type="Rhea" id="RHEA-COMP:9665"/>
        <dbReference type="Rhea" id="RHEA-COMP:9689"/>
        <dbReference type="ChEBI" id="CHEBI:15378"/>
        <dbReference type="ChEBI" id="CHEBI:30616"/>
        <dbReference type="ChEBI" id="CHEBI:33019"/>
        <dbReference type="ChEBI" id="CHEBI:57595"/>
        <dbReference type="ChEBI" id="CHEBI:78442"/>
        <dbReference type="ChEBI" id="CHEBI:78527"/>
        <dbReference type="ChEBI" id="CHEBI:456215"/>
        <dbReference type="EC" id="6.1.1.21"/>
    </reaction>
</comment>
<comment type="alternative products">
    <event type="alternative splicing"/>
    <isoform>
        <id>P34183-1</id>
        <name evidence="7">b</name>
        <sequence type="displayed"/>
    </isoform>
    <isoform>
        <id>P34183-2</id>
        <name evidence="6">a</name>
        <sequence type="described" ref="VSP_011853"/>
    </isoform>
</comment>
<comment type="disruption phenotype">
    <text evidence="2 3">RNAi-mediated knockdown results in gonadal defects including smaller, narrower gonads and reduced fertility with either no oocytes or no fertilized eggs in the majority of animals (PubMed:21464306). RNAi-mediated knockdown results in an increase in the expression of gpdh-1 independent of hypertonic stress (PubMed:23076791).</text>
</comment>
<comment type="similarity">
    <text evidence="5">Belongs to the class-II aminoacyl-tRNA synthetase family.</text>
</comment>
<comment type="sequence caution" evidence="5">
    <conflict type="erroneous gene model prediction">
        <sequence resource="EMBL-CDS" id="AAB38116"/>
    </conflict>
</comment>
<comment type="sequence caution" evidence="5">
    <conflict type="frameshift">
        <sequence resource="EMBL-CDS" id="AAB38116"/>
    </conflict>
</comment>
<comment type="sequence caution" evidence="5">
    <conflict type="frameshift">
        <sequence resource="EMBL-CDS" id="AAD14008"/>
    </conflict>
</comment>
<reference key="1">
    <citation type="journal article" date="1993" name="Nucleic Acids Res.">
        <title>Cloning and characterization of the C. elegans histidyl-tRNA synthetase gene.</title>
        <authorList>
            <person name="Amaar Y.G."/>
            <person name="Baillie D.L."/>
        </authorList>
    </citation>
    <scope>NUCLEOTIDE SEQUENCE [GENOMIC DNA / MRNA] (ISOFORM A)</scope>
    <source>
        <strain>Bristol N2</strain>
    </source>
</reference>
<reference key="2">
    <citation type="journal article" date="1993" name="Nucleic Acids Res.">
        <authorList>
            <person name="Amaar Y.G."/>
            <person name="Baillie D.L."/>
        </authorList>
    </citation>
    <scope>ERRATUM OF PUBMED:8414990</scope>
</reference>
<reference key="3">
    <citation type="submission" date="1996-12" db="EMBL/GenBank/DDBJ databases">
        <authorList>
            <person name="Amaar Y.G."/>
            <person name="Baillie D.L."/>
        </authorList>
    </citation>
    <scope>SEQUENCE REVISION</scope>
</reference>
<reference key="4">
    <citation type="journal article" date="1998" name="Science">
        <title>Genome sequence of the nematode C. elegans: a platform for investigating biology.</title>
        <authorList>
            <consortium name="The C. elegans sequencing consortium"/>
        </authorList>
    </citation>
    <scope>NUCLEOTIDE SEQUENCE [LARGE SCALE GENOMIC DNA]</scope>
    <scope>ALTERNATIVE SPLICING</scope>
    <source>
        <strain>Bristol N2</strain>
    </source>
</reference>
<reference key="5">
    <citation type="journal article" date="2011" name="Proc. Natl. Acad. Sci. U.S.A.">
        <title>Mutations in mitochondrial histidyl tRNA synthetase HARS2 cause ovarian dysgenesis and sensorineural hearing loss of Perrault syndrome.</title>
        <authorList>
            <person name="Pierce S.B."/>
            <person name="Chisholm K.M."/>
            <person name="Lynch E.D."/>
            <person name="Lee M.K."/>
            <person name="Walsh T."/>
            <person name="Opitz J.M."/>
            <person name="Li W."/>
            <person name="Klevit R.E."/>
            <person name="King M.C."/>
        </authorList>
    </citation>
    <scope>FUNCTION</scope>
    <scope>DISRUPTION PHENOTYPE</scope>
</reference>
<reference key="6">
    <citation type="journal article" date="2012" name="Am. J. Physiol.">
        <title>GCN-2 dependent inhibition of protein synthesis activates osmosensitive gene transcription via WNK and Ste20 kinase signaling.</title>
        <authorList>
            <person name="Lee E.C."/>
            <person name="Strange K."/>
        </authorList>
    </citation>
    <scope>FUNCTION</scope>
    <scope>DISRUPTION PHENOTYPE</scope>
</reference>
<dbReference type="EC" id="6.1.1.21"/>
<dbReference type="EMBL" id="L13152">
    <property type="protein sequence ID" value="AAB38116.1"/>
    <property type="status" value="ALT_FRAME"/>
    <property type="molecule type" value="Genomic_DNA"/>
</dbReference>
<dbReference type="EMBL" id="S68230">
    <property type="protein sequence ID" value="AAD14008.1"/>
    <property type="status" value="ALT_FRAME"/>
    <property type="molecule type" value="mRNA"/>
</dbReference>
<dbReference type="EMBL" id="Z69384">
    <property type="protein sequence ID" value="CAA93416.2"/>
    <property type="molecule type" value="Genomic_DNA"/>
</dbReference>
<dbReference type="EMBL" id="Z69384">
    <property type="protein sequence ID" value="CAD89746.1"/>
    <property type="molecule type" value="Genomic_DNA"/>
</dbReference>
<dbReference type="PIR" id="S41763">
    <property type="entry name" value="S41763"/>
</dbReference>
<dbReference type="PIR" id="T24848">
    <property type="entry name" value="T24848"/>
</dbReference>
<dbReference type="RefSeq" id="NP_001023373.2">
    <molecule id="P34183-2"/>
    <property type="nucleotide sequence ID" value="NM_001028202.5"/>
</dbReference>
<dbReference type="RefSeq" id="NP_001023374.1">
    <molecule id="P34183-1"/>
    <property type="nucleotide sequence ID" value="NM_001028203.7"/>
</dbReference>
<dbReference type="SMR" id="P34183"/>
<dbReference type="BioGRID" id="43079">
    <property type="interactions" value="2"/>
</dbReference>
<dbReference type="DIP" id="DIP-25741N"/>
<dbReference type="FunCoup" id="P34183">
    <property type="interactions" value="3548"/>
</dbReference>
<dbReference type="STRING" id="6239.T11G6.1a.1"/>
<dbReference type="PaxDb" id="6239-T11G6.1a.1"/>
<dbReference type="PeptideAtlas" id="P34183"/>
<dbReference type="EnsemblMetazoa" id="T11G6.1a.1">
    <molecule id="P34183-2"/>
    <property type="protein sequence ID" value="T11G6.1a.1"/>
    <property type="gene ID" value="WBGene00002001"/>
</dbReference>
<dbReference type="EnsemblMetazoa" id="T11G6.1b.1">
    <molecule id="P34183-1"/>
    <property type="protein sequence ID" value="T11G6.1b.1"/>
    <property type="gene ID" value="WBGene00002001"/>
</dbReference>
<dbReference type="GeneID" id="177978"/>
<dbReference type="KEGG" id="cel:CELE_T11G6.1"/>
<dbReference type="UCSC" id="T11G6.1a.1">
    <molecule id="P34183-1"/>
    <property type="organism name" value="c. elegans"/>
</dbReference>
<dbReference type="AGR" id="WB:WBGene00002001"/>
<dbReference type="CTD" id="177978"/>
<dbReference type="WormBase" id="T11G6.1a">
    <molecule id="P34183-2"/>
    <property type="protein sequence ID" value="CE47289"/>
    <property type="gene ID" value="WBGene00002001"/>
    <property type="gene designation" value="hars-1"/>
</dbReference>
<dbReference type="WormBase" id="T11G6.1b">
    <molecule id="P34183-1"/>
    <property type="protein sequence ID" value="CE33829"/>
    <property type="gene ID" value="WBGene00002001"/>
    <property type="gene designation" value="hars-1"/>
</dbReference>
<dbReference type="eggNOG" id="KOG1936">
    <property type="taxonomic scope" value="Eukaryota"/>
</dbReference>
<dbReference type="GeneTree" id="ENSGT00390000005922"/>
<dbReference type="HOGENOM" id="CLU_025113_4_2_1"/>
<dbReference type="InParanoid" id="P34183"/>
<dbReference type="OMA" id="CGGGNFK"/>
<dbReference type="OrthoDB" id="1906957at2759"/>
<dbReference type="PhylomeDB" id="P34183"/>
<dbReference type="BRENDA" id="6.1.1.21">
    <property type="organism ID" value="1045"/>
</dbReference>
<dbReference type="PRO" id="PR:P34183"/>
<dbReference type="Proteomes" id="UP000001940">
    <property type="component" value="Chromosome IV"/>
</dbReference>
<dbReference type="Bgee" id="WBGene00002001">
    <property type="expression patterns" value="Expressed in germ line (C elegans) and 4 other cell types or tissues"/>
</dbReference>
<dbReference type="GO" id="GO:0005737">
    <property type="term" value="C:cytoplasm"/>
    <property type="evidence" value="ECO:0000250"/>
    <property type="project" value="WormBase"/>
</dbReference>
<dbReference type="GO" id="GO:0005829">
    <property type="term" value="C:cytosol"/>
    <property type="evidence" value="ECO:0000318"/>
    <property type="project" value="GO_Central"/>
</dbReference>
<dbReference type="GO" id="GO:0005739">
    <property type="term" value="C:mitochondrion"/>
    <property type="evidence" value="ECO:0000250"/>
    <property type="project" value="WormBase"/>
</dbReference>
<dbReference type="GO" id="GO:0005524">
    <property type="term" value="F:ATP binding"/>
    <property type="evidence" value="ECO:0007669"/>
    <property type="project" value="UniProtKB-KW"/>
</dbReference>
<dbReference type="GO" id="GO:0004821">
    <property type="term" value="F:histidine-tRNA ligase activity"/>
    <property type="evidence" value="ECO:0000250"/>
    <property type="project" value="WormBase"/>
</dbReference>
<dbReference type="GO" id="GO:0042802">
    <property type="term" value="F:identical protein binding"/>
    <property type="evidence" value="ECO:0000250"/>
    <property type="project" value="WormBase"/>
</dbReference>
<dbReference type="GO" id="GO:0003723">
    <property type="term" value="F:RNA binding"/>
    <property type="evidence" value="ECO:0000318"/>
    <property type="project" value="GO_Central"/>
</dbReference>
<dbReference type="GO" id="GO:0007281">
    <property type="term" value="P:germ cell development"/>
    <property type="evidence" value="ECO:0000315"/>
    <property type="project" value="WormBase"/>
</dbReference>
<dbReference type="GO" id="GO:0006427">
    <property type="term" value="P:histidyl-tRNA aminoacylation"/>
    <property type="evidence" value="ECO:0000250"/>
    <property type="project" value="WormBase"/>
</dbReference>
<dbReference type="GO" id="GO:0032543">
    <property type="term" value="P:mitochondrial translation"/>
    <property type="evidence" value="ECO:0000318"/>
    <property type="project" value="GO_Central"/>
</dbReference>
<dbReference type="GO" id="GO:0002119">
    <property type="term" value="P:nematode larval development"/>
    <property type="evidence" value="ECO:0000315"/>
    <property type="project" value="WormBase"/>
</dbReference>
<dbReference type="GO" id="GO:0006412">
    <property type="term" value="P:translation"/>
    <property type="evidence" value="ECO:0000315"/>
    <property type="project" value="UniProtKB"/>
</dbReference>
<dbReference type="CDD" id="cd00773">
    <property type="entry name" value="HisRS-like_core"/>
    <property type="match status" value="1"/>
</dbReference>
<dbReference type="CDD" id="cd00859">
    <property type="entry name" value="HisRS_anticodon"/>
    <property type="match status" value="1"/>
</dbReference>
<dbReference type="FunFam" id="3.40.50.800:FF:000008">
    <property type="entry name" value="histidine--tRNA ligase, cytoplasmic isoform X1"/>
    <property type="match status" value="1"/>
</dbReference>
<dbReference type="FunFam" id="3.30.930.10:FF:000092">
    <property type="entry name" value="Histidyl-tRNA synthetase putative"/>
    <property type="match status" value="1"/>
</dbReference>
<dbReference type="Gene3D" id="3.40.50.800">
    <property type="entry name" value="Anticodon-binding domain"/>
    <property type="match status" value="1"/>
</dbReference>
<dbReference type="Gene3D" id="3.30.930.10">
    <property type="entry name" value="Bira Bifunctional Protein, Domain 2"/>
    <property type="match status" value="1"/>
</dbReference>
<dbReference type="InterPro" id="IPR006195">
    <property type="entry name" value="aa-tRNA-synth_II"/>
</dbReference>
<dbReference type="InterPro" id="IPR045864">
    <property type="entry name" value="aa-tRNA-synth_II/BPL/LPL"/>
</dbReference>
<dbReference type="InterPro" id="IPR004154">
    <property type="entry name" value="Anticodon-bd"/>
</dbReference>
<dbReference type="InterPro" id="IPR036621">
    <property type="entry name" value="Anticodon-bd_dom_sf"/>
</dbReference>
<dbReference type="InterPro" id="IPR015807">
    <property type="entry name" value="His-tRNA-ligase"/>
</dbReference>
<dbReference type="InterPro" id="IPR041715">
    <property type="entry name" value="HisRS-like_core"/>
</dbReference>
<dbReference type="InterPro" id="IPR004516">
    <property type="entry name" value="HisRS/HisZ"/>
</dbReference>
<dbReference type="InterPro" id="IPR033656">
    <property type="entry name" value="HisRS_anticodon"/>
</dbReference>
<dbReference type="NCBIfam" id="TIGR00442">
    <property type="entry name" value="hisS"/>
    <property type="match status" value="1"/>
</dbReference>
<dbReference type="PANTHER" id="PTHR11476:SF7">
    <property type="entry name" value="HISTIDINE--TRNA LIGASE"/>
    <property type="match status" value="1"/>
</dbReference>
<dbReference type="PANTHER" id="PTHR11476">
    <property type="entry name" value="HISTIDYL-TRNA SYNTHETASE"/>
    <property type="match status" value="1"/>
</dbReference>
<dbReference type="Pfam" id="PF03129">
    <property type="entry name" value="HGTP_anticodon"/>
    <property type="match status" value="1"/>
</dbReference>
<dbReference type="Pfam" id="PF13393">
    <property type="entry name" value="tRNA-synt_His"/>
    <property type="match status" value="1"/>
</dbReference>
<dbReference type="PIRSF" id="PIRSF001549">
    <property type="entry name" value="His-tRNA_synth"/>
    <property type="match status" value="1"/>
</dbReference>
<dbReference type="SUPFAM" id="SSF52954">
    <property type="entry name" value="Class II aaRS ABD-related"/>
    <property type="match status" value="1"/>
</dbReference>
<dbReference type="SUPFAM" id="SSF55681">
    <property type="entry name" value="Class II aaRS and biotin synthetases"/>
    <property type="match status" value="1"/>
</dbReference>
<dbReference type="PROSITE" id="PS50862">
    <property type="entry name" value="AA_TRNA_LIGASE_II"/>
    <property type="match status" value="1"/>
</dbReference>
<organism>
    <name type="scientific">Caenorhabditis elegans</name>
    <dbReference type="NCBI Taxonomy" id="6239"/>
    <lineage>
        <taxon>Eukaryota</taxon>
        <taxon>Metazoa</taxon>
        <taxon>Ecdysozoa</taxon>
        <taxon>Nematoda</taxon>
        <taxon>Chromadorea</taxon>
        <taxon>Rhabditida</taxon>
        <taxon>Rhabditina</taxon>
        <taxon>Rhabditomorpha</taxon>
        <taxon>Rhabditoidea</taxon>
        <taxon>Rhabditidae</taxon>
        <taxon>Peloderinae</taxon>
        <taxon>Caenorhabditis</taxon>
    </lineage>
</organism>
<feature type="chain" id="PRO_0000136338" description="Histidine--tRNA ligase">
    <location>
        <begin position="1"/>
        <end position="521"/>
    </location>
</feature>
<feature type="binding site" evidence="1">
    <location>
        <begin position="137"/>
        <end position="139"/>
    </location>
    <ligand>
        <name>L-histidine</name>
        <dbReference type="ChEBI" id="CHEBI:57595"/>
    </ligand>
</feature>
<feature type="binding site" evidence="1">
    <location>
        <position position="164"/>
    </location>
    <ligand>
        <name>L-histidine</name>
        <dbReference type="ChEBI" id="CHEBI:57595"/>
    </ligand>
</feature>
<feature type="binding site" evidence="1">
    <location>
        <position position="180"/>
    </location>
    <ligand>
        <name>L-histidine</name>
        <dbReference type="ChEBI" id="CHEBI:57595"/>
    </ligand>
</feature>
<feature type="binding site" evidence="1">
    <location>
        <position position="184"/>
    </location>
    <ligand>
        <name>L-histidine</name>
        <dbReference type="ChEBI" id="CHEBI:57595"/>
    </ligand>
</feature>
<feature type="binding site" evidence="1">
    <location>
        <position position="338"/>
    </location>
    <ligand>
        <name>L-histidine</name>
        <dbReference type="ChEBI" id="CHEBI:57595"/>
    </ligand>
</feature>
<feature type="binding site" evidence="1">
    <location>
        <begin position="342"/>
        <end position="343"/>
    </location>
    <ligand>
        <name>L-histidine</name>
        <dbReference type="ChEBI" id="CHEBI:57595"/>
    </ligand>
</feature>
<feature type="splice variant" id="VSP_011853" description="In isoform a." evidence="4">
    <original>MFRTITSRLAFSVRQAEETVKPRIAYAQRSGRR</original>
    <variation>MSSKMTAERKAILMQEAQALGDEIRQLKLDKADQAI</variation>
    <location>
        <begin position="1"/>
        <end position="33"/>
    </location>
</feature>
<feature type="sequence conflict" description="In Ref. 1; AAB38116/AAD14008." evidence="5" ref="1">
    <original>LNH</original>
    <variation>V</variation>
    <location>
        <begin position="218"/>
        <end position="220"/>
    </location>
</feature>
<feature type="sequence conflict" description="In Ref. 1; AAB38116/AAD14008." evidence="5" ref="1">
    <original>IKTE</original>
    <variation>TQGLK</variation>
    <location>
        <begin position="452"/>
        <end position="455"/>
    </location>
</feature>
<feature type="sequence conflict" description="In Ref. 1; AAB38116/AAD14008." evidence="5" ref="1">
    <original>QFQYAEERRIPLAIVIGEQELKDGVVKLRNV</original>
    <variation>SIPVCLRKDRIPSCYCYYESRAKMSVSAKC</variation>
    <location>
        <begin position="467"/>
        <end position="497"/>
    </location>
</feature>
<sequence>MFRTITSRLAFSVRQAEETVKPRIAYAQRSGRRIKEKVALMQAKRKEAGETGAPEKPGKFVLKTGKGTRDYGPAQSALRNSVLQTVTETFNRYGAETIDTPVFELRDVLMGKYGEEGGKLVYDLQDQGGELLSLRYDLTVPFARYLAMNKITNITRYQIAKVYRRDQPVMSRGRYREFYQCDFDIAGQYDLMLPEAECLGIVDELLTKLEIGEFFINLNHRLILEGMFAVSGIPAKDFKTICSSVDKLDKTPWEDVEQEMINEKFLTKEQTGKLGELVRFRELNSDLNNLELLEKMSQLPDLGQNDKFKKGAEELKVLIEYLNVDGVTTVRYEPSLARGLDYYTGAIYEAVAPKALEGTAVENSEDTAGQPVGVGSVAAGGRYDGLVKMFDSKANVPCCGVSFGIERLFAIMEARQKVAIRTTQTEVYVASAQKNLVRDRKKLVKMLRSAGIKTEMALKANPKLLTQFQYAEERRIPLAIVIGEQELKDGVVKLRNVVTRDEQTIKLDQLITAVRDTLAAL</sequence>
<accession>P34183</accession>
<accession>Q22408</accession>
<accession>Q26342</accession>
<accession>Q86DB0</accession>
<name>SYH_CAEEL</name>
<protein>
    <recommendedName>
        <fullName>Histidine--tRNA ligase</fullName>
        <ecNumber>6.1.1.21</ecNumber>
    </recommendedName>
    <alternativeName>
        <fullName>Histidyl-tRNA synthetase</fullName>
        <shortName>HisRS</shortName>
    </alternativeName>
</protein>
<evidence type="ECO:0000250" key="1">
    <source>
        <dbReference type="UniProtKB" id="P12081"/>
    </source>
</evidence>
<evidence type="ECO:0000269" key="2">
    <source>
    </source>
</evidence>
<evidence type="ECO:0000269" key="3">
    <source>
    </source>
</evidence>
<evidence type="ECO:0000303" key="4">
    <source>
    </source>
</evidence>
<evidence type="ECO:0000305" key="5"/>
<evidence type="ECO:0000312" key="6">
    <source>
        <dbReference type="WormBase" id="T11G6.1a"/>
    </source>
</evidence>
<evidence type="ECO:0000312" key="7">
    <source>
        <dbReference type="WormBase" id="T11G6.1b"/>
    </source>
</evidence>